<proteinExistence type="inferred from homology"/>
<comment type="similarity">
    <text evidence="3">Belongs to the thermonuclease family.</text>
</comment>
<accession>Q99342</accession>
<geneLocation type="plasmid">
    <name>IncFII R100</name>
    <name>NR1</name>
</geneLocation>
<keyword id="KW-0255">Endonuclease</keyword>
<keyword id="KW-0378">Hydrolase</keyword>
<keyword id="KW-0540">Nuclease</keyword>
<keyword id="KW-0614">Plasmid</keyword>
<keyword id="KW-0732">Signal</keyword>
<dbReference type="EC" id="3.1.-.-"/>
<dbReference type="EMBL" id="X55815">
    <property type="protein sequence ID" value="CAA39343.1"/>
    <property type="molecule type" value="Genomic_DNA"/>
</dbReference>
<dbReference type="PIR" id="S10665">
    <property type="entry name" value="S10665"/>
</dbReference>
<dbReference type="RefSeq" id="WP_001233850.1">
    <property type="nucleotide sequence ID" value="NZ_WVVH01000037.1"/>
</dbReference>
<dbReference type="RefSeq" id="YP_001096506.1">
    <property type="nucleotide sequence ID" value="NC_009133.1"/>
</dbReference>
<dbReference type="SMR" id="Q99342"/>
<dbReference type="GeneID" id="83576037"/>
<dbReference type="GO" id="GO:0004519">
    <property type="term" value="F:endonuclease activity"/>
    <property type="evidence" value="ECO:0007669"/>
    <property type="project" value="UniProtKB-KW"/>
</dbReference>
<dbReference type="GO" id="GO:0003676">
    <property type="term" value="F:nucleic acid binding"/>
    <property type="evidence" value="ECO:0007669"/>
    <property type="project" value="InterPro"/>
</dbReference>
<dbReference type="CDD" id="cd00175">
    <property type="entry name" value="SNc"/>
    <property type="match status" value="1"/>
</dbReference>
<dbReference type="Gene3D" id="2.40.50.90">
    <property type="match status" value="1"/>
</dbReference>
<dbReference type="InterPro" id="IPR035437">
    <property type="entry name" value="SNase_OB-fold_sf"/>
</dbReference>
<dbReference type="InterPro" id="IPR016071">
    <property type="entry name" value="Staphylococal_nuclease_OB-fold"/>
</dbReference>
<dbReference type="InterPro" id="IPR002071">
    <property type="entry name" value="Thermonucl_AS"/>
</dbReference>
<dbReference type="PANTHER" id="PTHR12302">
    <property type="entry name" value="EBNA2 BINDING PROTEIN P100"/>
    <property type="match status" value="1"/>
</dbReference>
<dbReference type="PANTHER" id="PTHR12302:SF3">
    <property type="entry name" value="SERINE_THREONINE-PROTEIN KINASE 31"/>
    <property type="match status" value="1"/>
</dbReference>
<dbReference type="Pfam" id="PF00565">
    <property type="entry name" value="SNase"/>
    <property type="match status" value="1"/>
</dbReference>
<dbReference type="SMART" id="SM00318">
    <property type="entry name" value="SNc"/>
    <property type="match status" value="1"/>
</dbReference>
<dbReference type="SUPFAM" id="SSF50199">
    <property type="entry name" value="Staphylococcal nuclease"/>
    <property type="match status" value="1"/>
</dbReference>
<dbReference type="PROSITE" id="PS01123">
    <property type="entry name" value="TNASE_1"/>
    <property type="match status" value="1"/>
</dbReference>
<dbReference type="PROSITE" id="PS01284">
    <property type="entry name" value="TNASE_2"/>
    <property type="match status" value="1"/>
</dbReference>
<dbReference type="PROSITE" id="PS50830">
    <property type="entry name" value="TNASE_3"/>
    <property type="match status" value="1"/>
</dbReference>
<protein>
    <recommendedName>
        <fullName>Uncharacterized endonuclease</fullName>
        <ecNumber>3.1.-.-</ecNumber>
    </recommendedName>
    <alternativeName>
        <fullName>ORFA</fullName>
    </alternativeName>
</protein>
<reference key="1">
    <citation type="journal article" date="1990" name="J. Mol. Biol.">
        <title>Nucleotide sequence of the promoter-distal region of the tra operon of plasmid R100, including traI (DNA helicase I) and traD genes.</title>
        <authorList>
            <person name="Yoshioka Y."/>
            <person name="Fujita Y."/>
            <person name="Ohtsubo E."/>
        </authorList>
    </citation>
    <scope>NUCLEOTIDE SEQUENCE [GENOMIC DNA]</scope>
</reference>
<organism>
    <name type="scientific">Escherichia coli</name>
    <dbReference type="NCBI Taxonomy" id="562"/>
    <lineage>
        <taxon>Bacteria</taxon>
        <taxon>Pseudomonadati</taxon>
        <taxon>Pseudomonadota</taxon>
        <taxon>Gammaproteobacteria</taxon>
        <taxon>Enterobacterales</taxon>
        <taxon>Enterobacteriaceae</taxon>
        <taxon>Escherichia</taxon>
    </lineage>
</organism>
<name>YFI3_ECOLX</name>
<sequence length="153" mass="17854">MRKYIPLVLFIFSWPVLCADIHGRVVRVLDGDTIEVMDSRKAVRIRLVNIDAPEKKQDYGRWSTDMMKSLVAGKTVTVTYFQRDRYGRILGQVYAPDGMNVNQFMVRAGAAWVYEQYNTDPVLPVLQNEARQQKRGLWSDADPVPPWIWRHRK</sequence>
<feature type="signal peptide" evidence="2">
    <location>
        <begin position="1"/>
        <end position="19"/>
    </location>
</feature>
<feature type="chain" id="PRO_0000034395" description="Uncharacterized endonuclease">
    <location>
        <begin position="20"/>
        <end position="153"/>
    </location>
</feature>
<feature type="active site" evidence="1">
    <location>
        <position position="46"/>
    </location>
</feature>
<feature type="active site" evidence="1">
    <location>
        <position position="54"/>
    </location>
</feature>
<feature type="active site" evidence="1">
    <location>
        <position position="88"/>
    </location>
</feature>
<evidence type="ECO:0000250" key="1"/>
<evidence type="ECO:0000255" key="2"/>
<evidence type="ECO:0000255" key="3">
    <source>
        <dbReference type="PROSITE-ProRule" id="PRU00272"/>
    </source>
</evidence>